<name>SYC_STRA5</name>
<reference key="1">
    <citation type="journal article" date="2002" name="Proc. Natl. Acad. Sci. U.S.A.">
        <title>Complete genome sequence and comparative genomic analysis of an emerging human pathogen, serotype V Streptococcus agalactiae.</title>
        <authorList>
            <person name="Tettelin H."/>
            <person name="Masignani V."/>
            <person name="Cieslewicz M.J."/>
            <person name="Eisen J.A."/>
            <person name="Peterson S.N."/>
            <person name="Wessels M.R."/>
            <person name="Paulsen I.T."/>
            <person name="Nelson K.E."/>
            <person name="Margarit I."/>
            <person name="Read T.D."/>
            <person name="Madoff L.C."/>
            <person name="Wolf A.M."/>
            <person name="Beanan M.J."/>
            <person name="Brinkac L.M."/>
            <person name="Daugherty S.C."/>
            <person name="DeBoy R.T."/>
            <person name="Durkin A.S."/>
            <person name="Kolonay J.F."/>
            <person name="Madupu R."/>
            <person name="Lewis M.R."/>
            <person name="Radune D."/>
            <person name="Fedorova N.B."/>
            <person name="Scanlan D."/>
            <person name="Khouri H.M."/>
            <person name="Mulligan S."/>
            <person name="Carty H.A."/>
            <person name="Cline R.T."/>
            <person name="Van Aken S.E."/>
            <person name="Gill J."/>
            <person name="Scarselli M."/>
            <person name="Mora M."/>
            <person name="Iacobini E.T."/>
            <person name="Brettoni C."/>
            <person name="Galli G."/>
            <person name="Mariani M."/>
            <person name="Vegni F."/>
            <person name="Maione D."/>
            <person name="Rinaudo D."/>
            <person name="Rappuoli R."/>
            <person name="Telford J.L."/>
            <person name="Kasper D.L."/>
            <person name="Grandi G."/>
            <person name="Fraser C.M."/>
        </authorList>
    </citation>
    <scope>NUCLEOTIDE SEQUENCE [LARGE SCALE GENOMIC DNA]</scope>
    <source>
        <strain>ATCC BAA-611 / 2603 V/R</strain>
    </source>
</reference>
<accession>Q8E1Z4</accession>
<dbReference type="EC" id="6.1.1.16" evidence="1"/>
<dbReference type="EMBL" id="AE009948">
    <property type="protein sequence ID" value="AAM99114.1"/>
    <property type="molecule type" value="Genomic_DNA"/>
</dbReference>
<dbReference type="RefSeq" id="NP_687242.1">
    <property type="nucleotide sequence ID" value="NC_004116.1"/>
</dbReference>
<dbReference type="RefSeq" id="WP_000591131.1">
    <property type="nucleotide sequence ID" value="NC_004116.1"/>
</dbReference>
<dbReference type="SMR" id="Q8E1Z4"/>
<dbReference type="STRING" id="208435.SAG0207"/>
<dbReference type="KEGG" id="sag:SAG0207"/>
<dbReference type="PATRIC" id="fig|208435.3.peg.207"/>
<dbReference type="HOGENOM" id="CLU_013528_0_1_9"/>
<dbReference type="OrthoDB" id="9815130at2"/>
<dbReference type="Proteomes" id="UP000000821">
    <property type="component" value="Chromosome"/>
</dbReference>
<dbReference type="GO" id="GO:0005829">
    <property type="term" value="C:cytosol"/>
    <property type="evidence" value="ECO:0007669"/>
    <property type="project" value="TreeGrafter"/>
</dbReference>
<dbReference type="GO" id="GO:0005524">
    <property type="term" value="F:ATP binding"/>
    <property type="evidence" value="ECO:0007669"/>
    <property type="project" value="UniProtKB-UniRule"/>
</dbReference>
<dbReference type="GO" id="GO:0004817">
    <property type="term" value="F:cysteine-tRNA ligase activity"/>
    <property type="evidence" value="ECO:0007669"/>
    <property type="project" value="UniProtKB-UniRule"/>
</dbReference>
<dbReference type="GO" id="GO:0008270">
    <property type="term" value="F:zinc ion binding"/>
    <property type="evidence" value="ECO:0007669"/>
    <property type="project" value="UniProtKB-UniRule"/>
</dbReference>
<dbReference type="GO" id="GO:0006423">
    <property type="term" value="P:cysteinyl-tRNA aminoacylation"/>
    <property type="evidence" value="ECO:0007669"/>
    <property type="project" value="UniProtKB-UniRule"/>
</dbReference>
<dbReference type="CDD" id="cd00672">
    <property type="entry name" value="CysRS_core"/>
    <property type="match status" value="1"/>
</dbReference>
<dbReference type="FunFam" id="3.40.50.620:FF:000130">
    <property type="entry name" value="Cysteine--tRNA ligase"/>
    <property type="match status" value="1"/>
</dbReference>
<dbReference type="Gene3D" id="1.20.120.640">
    <property type="entry name" value="Anticodon-binding domain of a subclass of class I aminoacyl-tRNA synthetases"/>
    <property type="match status" value="1"/>
</dbReference>
<dbReference type="Gene3D" id="3.40.50.620">
    <property type="entry name" value="HUPs"/>
    <property type="match status" value="1"/>
</dbReference>
<dbReference type="HAMAP" id="MF_00041">
    <property type="entry name" value="Cys_tRNA_synth"/>
    <property type="match status" value="1"/>
</dbReference>
<dbReference type="InterPro" id="IPR015803">
    <property type="entry name" value="Cys-tRNA-ligase"/>
</dbReference>
<dbReference type="InterPro" id="IPR015273">
    <property type="entry name" value="Cys-tRNA-synt_Ia_DALR"/>
</dbReference>
<dbReference type="InterPro" id="IPR024909">
    <property type="entry name" value="Cys-tRNA/MSH_ligase"/>
</dbReference>
<dbReference type="InterPro" id="IPR056411">
    <property type="entry name" value="CysS_C"/>
</dbReference>
<dbReference type="InterPro" id="IPR014729">
    <property type="entry name" value="Rossmann-like_a/b/a_fold"/>
</dbReference>
<dbReference type="InterPro" id="IPR032678">
    <property type="entry name" value="tRNA-synt_1_cat_dom"/>
</dbReference>
<dbReference type="InterPro" id="IPR009080">
    <property type="entry name" value="tRNAsynth_Ia_anticodon-bd"/>
</dbReference>
<dbReference type="NCBIfam" id="TIGR00435">
    <property type="entry name" value="cysS"/>
    <property type="match status" value="1"/>
</dbReference>
<dbReference type="PANTHER" id="PTHR10890:SF3">
    <property type="entry name" value="CYSTEINE--TRNA LIGASE, CYTOPLASMIC"/>
    <property type="match status" value="1"/>
</dbReference>
<dbReference type="PANTHER" id="PTHR10890">
    <property type="entry name" value="CYSTEINYL-TRNA SYNTHETASE"/>
    <property type="match status" value="1"/>
</dbReference>
<dbReference type="Pfam" id="PF23493">
    <property type="entry name" value="CysS_C"/>
    <property type="match status" value="1"/>
</dbReference>
<dbReference type="Pfam" id="PF09190">
    <property type="entry name" value="DALR_2"/>
    <property type="match status" value="1"/>
</dbReference>
<dbReference type="Pfam" id="PF01406">
    <property type="entry name" value="tRNA-synt_1e"/>
    <property type="match status" value="1"/>
</dbReference>
<dbReference type="PRINTS" id="PR00983">
    <property type="entry name" value="TRNASYNTHCYS"/>
</dbReference>
<dbReference type="SMART" id="SM00840">
    <property type="entry name" value="DALR_2"/>
    <property type="match status" value="1"/>
</dbReference>
<dbReference type="SUPFAM" id="SSF47323">
    <property type="entry name" value="Anticodon-binding domain of a subclass of class I aminoacyl-tRNA synthetases"/>
    <property type="match status" value="1"/>
</dbReference>
<dbReference type="SUPFAM" id="SSF52374">
    <property type="entry name" value="Nucleotidylyl transferase"/>
    <property type="match status" value="1"/>
</dbReference>
<organism>
    <name type="scientific">Streptococcus agalactiae serotype V (strain ATCC BAA-611 / 2603 V/R)</name>
    <dbReference type="NCBI Taxonomy" id="208435"/>
    <lineage>
        <taxon>Bacteria</taxon>
        <taxon>Bacillati</taxon>
        <taxon>Bacillota</taxon>
        <taxon>Bacilli</taxon>
        <taxon>Lactobacillales</taxon>
        <taxon>Streptococcaceae</taxon>
        <taxon>Streptococcus</taxon>
    </lineage>
</organism>
<gene>
    <name evidence="1" type="primary">cysS</name>
    <name type="ordered locus">SAG0207</name>
</gene>
<feature type="chain" id="PRO_0000159487" description="Cysteine--tRNA ligase">
    <location>
        <begin position="1"/>
        <end position="447"/>
    </location>
</feature>
<feature type="short sequence motif" description="'HIGH' region">
    <location>
        <begin position="30"/>
        <end position="40"/>
    </location>
</feature>
<feature type="short sequence motif" description="'KMSKS' region">
    <location>
        <begin position="268"/>
        <end position="272"/>
    </location>
</feature>
<feature type="binding site" evidence="1">
    <location>
        <position position="28"/>
    </location>
    <ligand>
        <name>Zn(2+)</name>
        <dbReference type="ChEBI" id="CHEBI:29105"/>
    </ligand>
</feature>
<feature type="binding site" evidence="1">
    <location>
        <position position="211"/>
    </location>
    <ligand>
        <name>Zn(2+)</name>
        <dbReference type="ChEBI" id="CHEBI:29105"/>
    </ligand>
</feature>
<feature type="binding site" evidence="1">
    <location>
        <position position="236"/>
    </location>
    <ligand>
        <name>Zn(2+)</name>
        <dbReference type="ChEBI" id="CHEBI:29105"/>
    </ligand>
</feature>
<feature type="binding site" evidence="1">
    <location>
        <position position="240"/>
    </location>
    <ligand>
        <name>Zn(2+)</name>
        <dbReference type="ChEBI" id="CHEBI:29105"/>
    </ligand>
</feature>
<feature type="binding site" evidence="1">
    <location>
        <position position="271"/>
    </location>
    <ligand>
        <name>ATP</name>
        <dbReference type="ChEBI" id="CHEBI:30616"/>
    </ligand>
</feature>
<comment type="catalytic activity">
    <reaction evidence="1">
        <text>tRNA(Cys) + L-cysteine + ATP = L-cysteinyl-tRNA(Cys) + AMP + diphosphate</text>
        <dbReference type="Rhea" id="RHEA:17773"/>
        <dbReference type="Rhea" id="RHEA-COMP:9661"/>
        <dbReference type="Rhea" id="RHEA-COMP:9679"/>
        <dbReference type="ChEBI" id="CHEBI:30616"/>
        <dbReference type="ChEBI" id="CHEBI:33019"/>
        <dbReference type="ChEBI" id="CHEBI:35235"/>
        <dbReference type="ChEBI" id="CHEBI:78442"/>
        <dbReference type="ChEBI" id="CHEBI:78517"/>
        <dbReference type="ChEBI" id="CHEBI:456215"/>
        <dbReference type="EC" id="6.1.1.16"/>
    </reaction>
</comment>
<comment type="cofactor">
    <cofactor evidence="1">
        <name>Zn(2+)</name>
        <dbReference type="ChEBI" id="CHEBI:29105"/>
    </cofactor>
    <text evidence="1">Binds 1 zinc ion per subunit.</text>
</comment>
<comment type="subunit">
    <text evidence="1">Monomer.</text>
</comment>
<comment type="subcellular location">
    <subcellularLocation>
        <location evidence="1">Cytoplasm</location>
    </subcellularLocation>
</comment>
<comment type="similarity">
    <text evidence="1">Belongs to the class-I aminoacyl-tRNA synthetase family.</text>
</comment>
<proteinExistence type="inferred from homology"/>
<protein>
    <recommendedName>
        <fullName evidence="1">Cysteine--tRNA ligase</fullName>
        <ecNumber evidence="1">6.1.1.16</ecNumber>
    </recommendedName>
    <alternativeName>
        <fullName evidence="1">Cysteinyl-tRNA synthetase</fullName>
        <shortName evidence="1">CysRS</shortName>
    </alternativeName>
</protein>
<keyword id="KW-0030">Aminoacyl-tRNA synthetase</keyword>
<keyword id="KW-0067">ATP-binding</keyword>
<keyword id="KW-0963">Cytoplasm</keyword>
<keyword id="KW-0436">Ligase</keyword>
<keyword id="KW-0479">Metal-binding</keyword>
<keyword id="KW-0547">Nucleotide-binding</keyword>
<keyword id="KW-0648">Protein biosynthesis</keyword>
<keyword id="KW-1185">Reference proteome</keyword>
<keyword id="KW-0862">Zinc</keyword>
<sequence>MIKIYDTMTRSLQDFIPLNEGKVNMYVCGPTVYNYIHIGNARSVVAFDTIRRYFEYCGYQVNYISNFTDVDDKIIKGAAEAGMDTKSFSDKFISAFMEDVAALGVKPATKNPRVIDYMDEIIDFVKVLVDKEFAYEANGDVYFRVSKSHHYAKLANKTLEDLEIGASGRVDGEGEIKENPLDFALWKSAKSGEVSWESPWGKGRPGWHIECSVMATEILGDTIDIHGGGADLEFPHHTNEIAQSEAKTGKTFANYWMHNGFVNVDNEKMSKSLGNFITVHDMLKSVDGQVIRFFLATQQYRKPVNFTEKAVHDAEVNLKYLKNTFNLPIQENANDEELEQFVKAFQGAMDDDFNTANGITVIFEMAKWINSGHYTSRVKETFAELLEIFGIVFQEEVLDADIESLIEQRQEARANRDFATADRIRDELAKQGIKLLDTKDGVRWTRD</sequence>
<evidence type="ECO:0000255" key="1">
    <source>
        <dbReference type="HAMAP-Rule" id="MF_00041"/>
    </source>
</evidence>